<gene>
    <name evidence="5" type="primary">prtA</name>
</gene>
<organism>
    <name type="scientific">Photorhabdus sp. (strain Az29)</name>
    <dbReference type="NCBI Taxonomy" id="229779"/>
    <lineage>
        <taxon>Bacteria</taxon>
        <taxon>Pseudomonadati</taxon>
        <taxon>Pseudomonadota</taxon>
        <taxon>Gammaproteobacteria</taxon>
        <taxon>Enterobacterales</taxon>
        <taxon>Morganellaceae</taxon>
        <taxon>Photorhabdus</taxon>
    </lineage>
</organism>
<name>PRTA_PHOAZ</name>
<reference evidence="6" key="1">
    <citation type="submission" date="2004-01" db="EMBL/GenBank/DDBJ databases">
        <title>Cloning and sequencing of the gene for a metalloprotease with an ABC transport system: a protease secreted by Photorhabdus sp. Az29 involved in the inhibition of insect antibacterial peptides.</title>
        <authorList>
            <person name="Cabral C.M."/>
            <person name="Montiel R."/>
            <person name="Simoes N."/>
        </authorList>
    </citation>
    <scope>NUCLEOTIDE SEQUENCE [GENOMIC DNA]</scope>
</reference>
<reference evidence="6" key="2">
    <citation type="journal article" date="2004" name="Appl. Environ. Microbiol.">
        <title>Purification and characterization of two distinct metalloproteases secreted by the entomopathogenic bacterium Photorhabdus sp. strain Az29.</title>
        <authorList>
            <person name="Cabral C.M."/>
            <person name="Cherqui A."/>
            <person name="Pereira A."/>
            <person name="Simoes N."/>
        </authorList>
    </citation>
    <scope>PROTEIN SEQUENCE OF 155-162; 166-197 AND 264-277</scope>
    <scope>FUNCTION</scope>
    <scope>ACTIVITY REGULATION</scope>
    <scope>BIOPHYSICOCHEMICAL PROPERTIES</scope>
    <scope>SUBCELLULAR LOCATION</scope>
</reference>
<evidence type="ECO:0000250" key="1">
    <source>
        <dbReference type="UniProtKB" id="P07268"/>
    </source>
</evidence>
<evidence type="ECO:0000255" key="2"/>
<evidence type="ECO:0000255" key="3">
    <source>
        <dbReference type="PROSITE-ProRule" id="PRU10095"/>
    </source>
</evidence>
<evidence type="ECO:0000269" key="4">
    <source>
    </source>
</evidence>
<evidence type="ECO:0000303" key="5">
    <source>
    </source>
</evidence>
<evidence type="ECO:0000305" key="6"/>
<comment type="function">
    <text evidence="4">Involved in the inhibition of insect antibacterial peptides. Reduces the antibacterial activity of G.mellonella hemolymph by 50%. Reduces the antibacterial activity of cecropin A by 80% and cecropin B by 75%.</text>
</comment>
<comment type="catalytic activity">
    <reaction>
        <text>Preferential cleavage of bonds with hydrophobic residues in P1'.</text>
        <dbReference type="EC" id="3.4.24.40"/>
    </reaction>
</comment>
<comment type="cofactor">
    <cofactor evidence="1">
        <name>Zn(2+)</name>
        <dbReference type="ChEBI" id="CHEBI:29105"/>
    </cofactor>
    <text evidence="1">Binds 1 zinc ion per subunit.</text>
</comment>
<comment type="cofactor">
    <cofactor evidence="1">
        <name>Ca(2+)</name>
        <dbReference type="ChEBI" id="CHEBI:29108"/>
    </cofactor>
</comment>
<comment type="activity regulation">
    <text evidence="4">Inhibited by 8 mM 1,10-phenanthroline and 10 mM EDTA, but not by PMSF.</text>
</comment>
<comment type="biophysicochemical properties">
    <phDependence>
        <text evidence="4">Optimum pH is 9.0.</text>
    </phDependence>
    <temperatureDependence>
        <text evidence="4">Optimum temperature is 50 degrees Celsius. Active from 10 to 80 degrees Celsius.</text>
    </temperatureDependence>
</comment>
<comment type="subcellular location">
    <subcellularLocation>
        <location evidence="4">Secreted</location>
    </subcellularLocation>
</comment>
<comment type="similarity">
    <text evidence="2">Belongs to the peptidase M10B family.</text>
</comment>
<protein>
    <recommendedName>
        <fullName>Serralysin</fullName>
        <ecNumber>3.4.24.40</ecNumber>
    </recommendedName>
    <alternativeName>
        <fullName>Protease PrtA</fullName>
    </alternativeName>
    <alternativeName>
        <fullName evidence="5">Secreted alkaline metalloproteinase</fullName>
    </alternativeName>
</protein>
<feature type="chain" id="PRO_0000078177" description="Serralysin">
    <location>
        <begin position="1"/>
        <end position="483"/>
    </location>
</feature>
<feature type="repeat" description="Hemolysin-type calcium-binding 1" evidence="2">
    <location>
        <begin position="342"/>
        <end position="359"/>
    </location>
</feature>
<feature type="repeat" description="Hemolysin-type calcium-binding 2" evidence="2">
    <location>
        <begin position="360"/>
        <end position="377"/>
    </location>
</feature>
<feature type="active site" evidence="1 3">
    <location>
        <position position="185"/>
    </location>
</feature>
<feature type="binding site" evidence="1 3">
    <location>
        <position position="184"/>
    </location>
    <ligand>
        <name>Zn(2+)</name>
        <dbReference type="ChEBI" id="CHEBI:29105"/>
        <note>catalytic</note>
    </ligand>
</feature>
<feature type="binding site" evidence="1 3">
    <location>
        <position position="188"/>
    </location>
    <ligand>
        <name>Zn(2+)</name>
        <dbReference type="ChEBI" id="CHEBI:29105"/>
        <note>catalytic</note>
    </ligand>
</feature>
<feature type="binding site" evidence="1 3">
    <location>
        <position position="194"/>
    </location>
    <ligand>
        <name>Zn(2+)</name>
        <dbReference type="ChEBI" id="CHEBI:29105"/>
        <note>catalytic</note>
    </ligand>
</feature>
<feature type="binding site" evidence="1">
    <location>
        <position position="263"/>
    </location>
    <ligand>
        <name>Ca(2+)</name>
        <dbReference type="ChEBI" id="CHEBI:29108"/>
        <label>1</label>
    </ligand>
</feature>
<feature type="binding site" evidence="1">
    <location>
        <position position="266"/>
    </location>
    <ligand>
        <name>Ca(2+)</name>
        <dbReference type="ChEBI" id="CHEBI:29108"/>
        <label>1</label>
    </ligand>
</feature>
<feature type="binding site" evidence="1">
    <location>
        <position position="295"/>
    </location>
    <ligand>
        <name>Ca(2+)</name>
        <dbReference type="ChEBI" id="CHEBI:29108"/>
        <label>1</label>
    </ligand>
</feature>
<feature type="binding site" evidence="1">
    <location>
        <position position="297"/>
    </location>
    <ligand>
        <name>Ca(2+)</name>
        <dbReference type="ChEBI" id="CHEBI:29108"/>
        <label>1</label>
    </ligand>
</feature>
<feature type="binding site" evidence="1">
    <location>
        <position position="298"/>
    </location>
    <ligand>
        <name>Ca(2+)</name>
        <dbReference type="ChEBI" id="CHEBI:29108"/>
        <label>2</label>
    </ligand>
</feature>
<feature type="binding site" evidence="1">
    <location>
        <position position="300"/>
    </location>
    <ligand>
        <name>Ca(2+)</name>
        <dbReference type="ChEBI" id="CHEBI:29108"/>
        <label>1</label>
    </ligand>
</feature>
<feature type="binding site" evidence="1">
    <location>
        <position position="300"/>
    </location>
    <ligand>
        <name>Ca(2+)</name>
        <dbReference type="ChEBI" id="CHEBI:29108"/>
        <label>2</label>
    </ligand>
</feature>
<feature type="binding site" evidence="1">
    <location>
        <position position="337"/>
    </location>
    <ligand>
        <name>Ca(2+)</name>
        <dbReference type="ChEBI" id="CHEBI:29108"/>
        <label>2</label>
    </ligand>
</feature>
<feature type="binding site" evidence="1">
    <location>
        <position position="339"/>
    </location>
    <ligand>
        <name>Ca(2+)</name>
        <dbReference type="ChEBI" id="CHEBI:29108"/>
        <label>2</label>
    </ligand>
</feature>
<dbReference type="EC" id="3.4.24.40"/>
<dbReference type="EMBL" id="AY531111">
    <property type="protein sequence ID" value="AAS19409.1"/>
    <property type="molecule type" value="Genomic_DNA"/>
</dbReference>
<dbReference type="SMR" id="P82115"/>
<dbReference type="MEROPS" id="M10.063"/>
<dbReference type="GO" id="GO:0005615">
    <property type="term" value="C:extracellular space"/>
    <property type="evidence" value="ECO:0007669"/>
    <property type="project" value="InterPro"/>
</dbReference>
<dbReference type="GO" id="GO:0005509">
    <property type="term" value="F:calcium ion binding"/>
    <property type="evidence" value="ECO:0007669"/>
    <property type="project" value="InterPro"/>
</dbReference>
<dbReference type="GO" id="GO:0004222">
    <property type="term" value="F:metalloendopeptidase activity"/>
    <property type="evidence" value="ECO:0007669"/>
    <property type="project" value="InterPro"/>
</dbReference>
<dbReference type="GO" id="GO:0008270">
    <property type="term" value="F:zinc ion binding"/>
    <property type="evidence" value="ECO:0007669"/>
    <property type="project" value="InterPro"/>
</dbReference>
<dbReference type="GO" id="GO:0030574">
    <property type="term" value="P:collagen catabolic process"/>
    <property type="evidence" value="ECO:0007669"/>
    <property type="project" value="TreeGrafter"/>
</dbReference>
<dbReference type="GO" id="GO:0030198">
    <property type="term" value="P:extracellular matrix organization"/>
    <property type="evidence" value="ECO:0007669"/>
    <property type="project" value="TreeGrafter"/>
</dbReference>
<dbReference type="GO" id="GO:0006508">
    <property type="term" value="P:proteolysis"/>
    <property type="evidence" value="ECO:0007669"/>
    <property type="project" value="UniProtKB-KW"/>
</dbReference>
<dbReference type="CDD" id="cd04277">
    <property type="entry name" value="ZnMc_serralysin_like"/>
    <property type="match status" value="1"/>
</dbReference>
<dbReference type="Gene3D" id="3.40.390.10">
    <property type="entry name" value="Collagenase (Catalytic Domain)"/>
    <property type="match status" value="1"/>
</dbReference>
<dbReference type="Gene3D" id="2.150.10.10">
    <property type="entry name" value="Serralysin-like metalloprotease, C-terminal"/>
    <property type="match status" value="1"/>
</dbReference>
<dbReference type="InterPro" id="IPR018511">
    <property type="entry name" value="Hemolysin-typ_Ca-bd_CS"/>
</dbReference>
<dbReference type="InterPro" id="IPR001343">
    <property type="entry name" value="Hemolysn_Ca-bd"/>
</dbReference>
<dbReference type="InterPro" id="IPR024079">
    <property type="entry name" value="MetalloPept_cat_dom_sf"/>
</dbReference>
<dbReference type="InterPro" id="IPR016294">
    <property type="entry name" value="Pept_M10B"/>
</dbReference>
<dbReference type="InterPro" id="IPR013858">
    <property type="entry name" value="Peptidase_M10B_C"/>
</dbReference>
<dbReference type="InterPro" id="IPR006026">
    <property type="entry name" value="Peptidase_Metallo"/>
</dbReference>
<dbReference type="InterPro" id="IPR034033">
    <property type="entry name" value="Serralysin-like"/>
</dbReference>
<dbReference type="InterPro" id="IPR011049">
    <property type="entry name" value="Serralysin-like_metalloprot_C"/>
</dbReference>
<dbReference type="NCBIfam" id="NF035945">
    <property type="entry name" value="Zn_serralysin"/>
    <property type="match status" value="1"/>
</dbReference>
<dbReference type="PANTHER" id="PTHR10201">
    <property type="entry name" value="MATRIX METALLOPROTEINASE"/>
    <property type="match status" value="1"/>
</dbReference>
<dbReference type="PANTHER" id="PTHR10201:SF294">
    <property type="entry name" value="MATRIX METALLOPROTEINASE 16"/>
    <property type="match status" value="1"/>
</dbReference>
<dbReference type="Pfam" id="PF00353">
    <property type="entry name" value="HemolysinCabind"/>
    <property type="match status" value="1"/>
</dbReference>
<dbReference type="Pfam" id="PF08548">
    <property type="entry name" value="Peptidase_M10_C"/>
    <property type="match status" value="1"/>
</dbReference>
<dbReference type="Pfam" id="PF13688">
    <property type="entry name" value="Reprolysin_5"/>
    <property type="match status" value="1"/>
</dbReference>
<dbReference type="PIRSF" id="PIRSF001205">
    <property type="entry name" value="Peptidase_M10B"/>
    <property type="match status" value="1"/>
</dbReference>
<dbReference type="PRINTS" id="PR00313">
    <property type="entry name" value="CABNDNGRPT"/>
</dbReference>
<dbReference type="SMART" id="SM00235">
    <property type="entry name" value="ZnMc"/>
    <property type="match status" value="1"/>
</dbReference>
<dbReference type="SUPFAM" id="SSF51120">
    <property type="entry name" value="beta-Roll"/>
    <property type="match status" value="1"/>
</dbReference>
<dbReference type="SUPFAM" id="SSF55486">
    <property type="entry name" value="Metalloproteases ('zincins'), catalytic domain"/>
    <property type="match status" value="1"/>
</dbReference>
<dbReference type="PROSITE" id="PS00330">
    <property type="entry name" value="HEMOLYSIN_CALCIUM"/>
    <property type="match status" value="1"/>
</dbReference>
<dbReference type="PROSITE" id="PS00142">
    <property type="entry name" value="ZINC_PROTEASE"/>
    <property type="match status" value="1"/>
</dbReference>
<keyword id="KW-0106">Calcium</keyword>
<keyword id="KW-0903">Direct protein sequencing</keyword>
<keyword id="KW-0378">Hydrolase</keyword>
<keyword id="KW-0479">Metal-binding</keyword>
<keyword id="KW-0482">Metalloprotease</keyword>
<keyword id="KW-0645">Protease</keyword>
<keyword id="KW-0677">Repeat</keyword>
<keyword id="KW-0964">Secreted</keyword>
<keyword id="KW-0862">Zinc</keyword>
<accession>P82115</accession>
<proteinExistence type="evidence at protein level"/>
<sequence>MERYMSLKKKISYSELIGSAKANELQTQLQAYVPGKDPNIVVEHEPSKNAAKELIRGDYRWGHQGDDKSETFQLTYSFLESEPDNMPWHITGFSAFNEEQRTAAKLSIQSWTDVANINFTETTDSDKAHITFGFFDASLTGSYAFAYLPSPESKQSGTWYNLKSRTFSENDIGVNGYGRQTFTHEIGHTLGLEHPAAYNASDKERPTYKKSATYFEDSRAYTVMSYFGEKNTRTDFKGIYSSAPLLNDISAIQEVYGANNTTRTDDTVYGFNSNTDRDFFTAKDENSKLLFTAWDAGGNDTFDFSGFTQDQRINLNEASFSDVGGLKGNVSIARGVTIENAIGGSGNDILIGNDAENILKGGAGDDIIYGGLGADQLWGGEGKDTFVYLSAKESPPLERDWIHDFVSGEDKIDVSLFDLGEAGKGGVKFVREFTGAVGEAVLRYDTVNKVNDFAINLGDKFSYDDFWVKIVGEPILESDFILA</sequence>